<gene>
    <name evidence="1" type="primary">mraZ</name>
    <name type="ordered locus">mma_3024</name>
</gene>
<keyword id="KW-0963">Cytoplasm</keyword>
<keyword id="KW-0238">DNA-binding</keyword>
<keyword id="KW-0677">Repeat</keyword>
<keyword id="KW-0804">Transcription</keyword>
<keyword id="KW-0805">Transcription regulation</keyword>
<comment type="subunit">
    <text evidence="1">Forms oligomers.</text>
</comment>
<comment type="subcellular location">
    <subcellularLocation>
        <location evidence="1">Cytoplasm</location>
        <location evidence="1">Nucleoid</location>
    </subcellularLocation>
</comment>
<comment type="similarity">
    <text evidence="1">Belongs to the MraZ family.</text>
</comment>
<accession>A6T2G7</accession>
<organism>
    <name type="scientific">Janthinobacterium sp. (strain Marseille)</name>
    <name type="common">Minibacterium massiliensis</name>
    <dbReference type="NCBI Taxonomy" id="375286"/>
    <lineage>
        <taxon>Bacteria</taxon>
        <taxon>Pseudomonadati</taxon>
        <taxon>Pseudomonadota</taxon>
        <taxon>Betaproteobacteria</taxon>
        <taxon>Burkholderiales</taxon>
        <taxon>Oxalobacteraceae</taxon>
        <taxon>Janthinobacterium</taxon>
    </lineage>
</organism>
<evidence type="ECO:0000255" key="1">
    <source>
        <dbReference type="HAMAP-Rule" id="MF_01008"/>
    </source>
</evidence>
<evidence type="ECO:0000255" key="2">
    <source>
        <dbReference type="PROSITE-ProRule" id="PRU01076"/>
    </source>
</evidence>
<reference key="1">
    <citation type="journal article" date="2007" name="PLoS Genet.">
        <title>Genome analysis of Minibacterium massiliensis highlights the convergent evolution of water-living bacteria.</title>
        <authorList>
            <person name="Audic S."/>
            <person name="Robert C."/>
            <person name="Campagna B."/>
            <person name="Parinello H."/>
            <person name="Claverie J.-M."/>
            <person name="Raoult D."/>
            <person name="Drancourt M."/>
        </authorList>
    </citation>
    <scope>NUCLEOTIDE SEQUENCE [LARGE SCALE GENOMIC DNA]</scope>
    <source>
        <strain>Marseille</strain>
    </source>
</reference>
<protein>
    <recommendedName>
        <fullName>Transcriptional regulator MraZ</fullName>
    </recommendedName>
</protein>
<sequence>MFQGASSLNLDAKGRMTIPSRHRDALLLQCEGRVTLTKHPHGCLLFFPRPVWESHREQIAAWPMSARAWQRIFLGNASDVEMDGAGRILIAPELRSAVGMTRDVMLLGMGSHFEIWDATKLAESEAAAVANGMPDVLNDFSF</sequence>
<dbReference type="EMBL" id="CP000269">
    <property type="protein sequence ID" value="ABR88625.1"/>
    <property type="molecule type" value="Genomic_DNA"/>
</dbReference>
<dbReference type="RefSeq" id="WP_012080873.1">
    <property type="nucleotide sequence ID" value="NC_009659.1"/>
</dbReference>
<dbReference type="SMR" id="A6T2G7"/>
<dbReference type="STRING" id="375286.mma_3024"/>
<dbReference type="KEGG" id="mms:mma_3024"/>
<dbReference type="eggNOG" id="COG2001">
    <property type="taxonomic scope" value="Bacteria"/>
</dbReference>
<dbReference type="HOGENOM" id="CLU_107907_2_1_4"/>
<dbReference type="OrthoDB" id="9807753at2"/>
<dbReference type="Proteomes" id="UP000006388">
    <property type="component" value="Chromosome"/>
</dbReference>
<dbReference type="GO" id="GO:0005737">
    <property type="term" value="C:cytoplasm"/>
    <property type="evidence" value="ECO:0007669"/>
    <property type="project" value="UniProtKB-UniRule"/>
</dbReference>
<dbReference type="GO" id="GO:0009295">
    <property type="term" value="C:nucleoid"/>
    <property type="evidence" value="ECO:0007669"/>
    <property type="project" value="UniProtKB-SubCell"/>
</dbReference>
<dbReference type="GO" id="GO:0003700">
    <property type="term" value="F:DNA-binding transcription factor activity"/>
    <property type="evidence" value="ECO:0007669"/>
    <property type="project" value="UniProtKB-UniRule"/>
</dbReference>
<dbReference type="GO" id="GO:0000976">
    <property type="term" value="F:transcription cis-regulatory region binding"/>
    <property type="evidence" value="ECO:0007669"/>
    <property type="project" value="TreeGrafter"/>
</dbReference>
<dbReference type="GO" id="GO:2000143">
    <property type="term" value="P:negative regulation of DNA-templated transcription initiation"/>
    <property type="evidence" value="ECO:0007669"/>
    <property type="project" value="TreeGrafter"/>
</dbReference>
<dbReference type="CDD" id="cd16321">
    <property type="entry name" value="MraZ_C"/>
    <property type="match status" value="1"/>
</dbReference>
<dbReference type="CDD" id="cd16320">
    <property type="entry name" value="MraZ_N"/>
    <property type="match status" value="1"/>
</dbReference>
<dbReference type="Gene3D" id="3.40.1550.20">
    <property type="entry name" value="Transcriptional regulator MraZ domain"/>
    <property type="match status" value="1"/>
</dbReference>
<dbReference type="HAMAP" id="MF_01008">
    <property type="entry name" value="MraZ"/>
    <property type="match status" value="1"/>
</dbReference>
<dbReference type="InterPro" id="IPR003444">
    <property type="entry name" value="MraZ"/>
</dbReference>
<dbReference type="InterPro" id="IPR035644">
    <property type="entry name" value="MraZ_C"/>
</dbReference>
<dbReference type="InterPro" id="IPR020603">
    <property type="entry name" value="MraZ_dom"/>
</dbReference>
<dbReference type="InterPro" id="IPR035642">
    <property type="entry name" value="MraZ_N"/>
</dbReference>
<dbReference type="InterPro" id="IPR038619">
    <property type="entry name" value="MraZ_sf"/>
</dbReference>
<dbReference type="InterPro" id="IPR007159">
    <property type="entry name" value="SpoVT-AbrB_dom"/>
</dbReference>
<dbReference type="InterPro" id="IPR037914">
    <property type="entry name" value="SpoVT-AbrB_sf"/>
</dbReference>
<dbReference type="NCBIfam" id="TIGR00242">
    <property type="entry name" value="division/cell wall cluster transcriptional repressor MraZ"/>
    <property type="match status" value="1"/>
</dbReference>
<dbReference type="PANTHER" id="PTHR34701">
    <property type="entry name" value="TRANSCRIPTIONAL REGULATOR MRAZ"/>
    <property type="match status" value="1"/>
</dbReference>
<dbReference type="PANTHER" id="PTHR34701:SF1">
    <property type="entry name" value="TRANSCRIPTIONAL REGULATOR MRAZ"/>
    <property type="match status" value="1"/>
</dbReference>
<dbReference type="Pfam" id="PF02381">
    <property type="entry name" value="MraZ"/>
    <property type="match status" value="2"/>
</dbReference>
<dbReference type="SUPFAM" id="SSF89447">
    <property type="entry name" value="AbrB/MazE/MraZ-like"/>
    <property type="match status" value="1"/>
</dbReference>
<dbReference type="PROSITE" id="PS51740">
    <property type="entry name" value="SPOVT_ABRB"/>
    <property type="match status" value="2"/>
</dbReference>
<feature type="chain" id="PRO_1000062884" description="Transcriptional regulator MraZ">
    <location>
        <begin position="1"/>
        <end position="142"/>
    </location>
</feature>
<feature type="domain" description="SpoVT-AbrB 1" evidence="2">
    <location>
        <begin position="5"/>
        <end position="51"/>
    </location>
</feature>
<feature type="domain" description="SpoVT-AbrB 2" evidence="2">
    <location>
        <begin position="77"/>
        <end position="120"/>
    </location>
</feature>
<name>MRAZ_JANMA</name>
<proteinExistence type="inferred from homology"/>